<name>RNM5_LISMO</name>
<organism>
    <name type="scientific">Listeria monocytogenes serovar 1/2a (strain ATCC BAA-679 / EGD-e)</name>
    <dbReference type="NCBI Taxonomy" id="169963"/>
    <lineage>
        <taxon>Bacteria</taxon>
        <taxon>Bacillati</taxon>
        <taxon>Bacillota</taxon>
        <taxon>Bacilli</taxon>
        <taxon>Bacillales</taxon>
        <taxon>Listeriaceae</taxon>
        <taxon>Listeria</taxon>
    </lineage>
</organism>
<accession>Q8YAE3</accession>
<sequence length="191" mass="20969">MSGKPVIHEFIVVEGRDDTTAINRSVIADTIETNGSALSQETIEKIRHAQELRGVIIFTDPDFPGEKIRKQIDSAVPGCKHAFINRQDALPKAGRGLGVEHASSANIREALENFHTSGAPTEKQFISKDILVHLGLLGGVGAKERREKIGNILKIGYTNGKQLQTRLESFAISEEQLVAACQKIMQEEENE</sequence>
<gene>
    <name evidence="1" type="primary">rnmV</name>
    <name type="ordered locus">lmo0187</name>
</gene>
<keyword id="KW-0963">Cytoplasm</keyword>
<keyword id="KW-0255">Endonuclease</keyword>
<keyword id="KW-0378">Hydrolase</keyword>
<keyword id="KW-0460">Magnesium</keyword>
<keyword id="KW-0479">Metal-binding</keyword>
<keyword id="KW-0540">Nuclease</keyword>
<keyword id="KW-1185">Reference proteome</keyword>
<keyword id="KW-0690">Ribosome biogenesis</keyword>
<keyword id="KW-0694">RNA-binding</keyword>
<keyword id="KW-0698">rRNA processing</keyword>
<keyword id="KW-0699">rRNA-binding</keyword>
<comment type="function">
    <text evidence="1">Required for correct processing of both the 5' and 3' ends of 5S rRNA precursor. Cleaves both sides of a double-stranded region yielding mature 5S rRNA in one step.</text>
</comment>
<comment type="catalytic activity">
    <reaction evidence="1">
        <text>Endonucleolytic cleavage of RNA, removing 21 and 42 nucleotides, respectively, from the 5'- and 3'-termini of a 5S-rRNA precursor.</text>
        <dbReference type="EC" id="3.1.26.8"/>
    </reaction>
</comment>
<comment type="cofactor">
    <cofactor evidence="1">
        <name>Mg(2+)</name>
        <dbReference type="ChEBI" id="CHEBI:18420"/>
    </cofactor>
    <text evidence="1">Binds two Mg(2+) per subunit.</text>
</comment>
<comment type="subcellular location">
    <subcellularLocation>
        <location evidence="1">Cytoplasm</location>
    </subcellularLocation>
</comment>
<comment type="similarity">
    <text evidence="1">Belongs to the ribonuclease M5 family.</text>
</comment>
<reference key="1">
    <citation type="journal article" date="2001" name="Science">
        <title>Comparative genomics of Listeria species.</title>
        <authorList>
            <person name="Glaser P."/>
            <person name="Frangeul L."/>
            <person name="Buchrieser C."/>
            <person name="Rusniok C."/>
            <person name="Amend A."/>
            <person name="Baquero F."/>
            <person name="Berche P."/>
            <person name="Bloecker H."/>
            <person name="Brandt P."/>
            <person name="Chakraborty T."/>
            <person name="Charbit A."/>
            <person name="Chetouani F."/>
            <person name="Couve E."/>
            <person name="de Daruvar A."/>
            <person name="Dehoux P."/>
            <person name="Domann E."/>
            <person name="Dominguez-Bernal G."/>
            <person name="Duchaud E."/>
            <person name="Durant L."/>
            <person name="Dussurget O."/>
            <person name="Entian K.-D."/>
            <person name="Fsihi H."/>
            <person name="Garcia-del Portillo F."/>
            <person name="Garrido P."/>
            <person name="Gautier L."/>
            <person name="Goebel W."/>
            <person name="Gomez-Lopez N."/>
            <person name="Hain T."/>
            <person name="Hauf J."/>
            <person name="Jackson D."/>
            <person name="Jones L.-M."/>
            <person name="Kaerst U."/>
            <person name="Kreft J."/>
            <person name="Kuhn M."/>
            <person name="Kunst F."/>
            <person name="Kurapkat G."/>
            <person name="Madueno E."/>
            <person name="Maitournam A."/>
            <person name="Mata Vicente J."/>
            <person name="Ng E."/>
            <person name="Nedjari H."/>
            <person name="Nordsiek G."/>
            <person name="Novella S."/>
            <person name="de Pablos B."/>
            <person name="Perez-Diaz J.-C."/>
            <person name="Purcell R."/>
            <person name="Remmel B."/>
            <person name="Rose M."/>
            <person name="Schlueter T."/>
            <person name="Simoes N."/>
            <person name="Tierrez A."/>
            <person name="Vazquez-Boland J.-A."/>
            <person name="Voss H."/>
            <person name="Wehland J."/>
            <person name="Cossart P."/>
        </authorList>
    </citation>
    <scope>NUCLEOTIDE SEQUENCE [LARGE SCALE GENOMIC DNA]</scope>
    <source>
        <strain>ATCC BAA-679 / EGD-e</strain>
    </source>
</reference>
<protein>
    <recommendedName>
        <fullName evidence="1">Ribonuclease M5</fullName>
        <ecNumber evidence="1">3.1.26.8</ecNumber>
    </recommendedName>
    <alternativeName>
        <fullName evidence="1">RNase M5</fullName>
    </alternativeName>
    <alternativeName>
        <fullName evidence="1">Ribosomal RNA terminal maturase M5</fullName>
    </alternativeName>
</protein>
<proteinExistence type="inferred from homology"/>
<feature type="chain" id="PRO_0000416754" description="Ribonuclease M5">
    <location>
        <begin position="1"/>
        <end position="191"/>
    </location>
</feature>
<feature type="domain" description="Toprim" evidence="1">
    <location>
        <begin position="8"/>
        <end position="91"/>
    </location>
</feature>
<feature type="binding site" evidence="1">
    <location>
        <position position="14"/>
    </location>
    <ligand>
        <name>Mg(2+)</name>
        <dbReference type="ChEBI" id="CHEBI:18420"/>
        <label>1</label>
        <note>catalytic</note>
    </ligand>
</feature>
<feature type="binding site" evidence="1">
    <location>
        <position position="60"/>
    </location>
    <ligand>
        <name>Mg(2+)</name>
        <dbReference type="ChEBI" id="CHEBI:18420"/>
        <label>1</label>
        <note>catalytic</note>
    </ligand>
</feature>
<feature type="binding site" evidence="1">
    <location>
        <position position="60"/>
    </location>
    <ligand>
        <name>Mg(2+)</name>
        <dbReference type="ChEBI" id="CHEBI:18420"/>
        <label>2</label>
    </ligand>
</feature>
<feature type="binding site" evidence="1">
    <location>
        <position position="62"/>
    </location>
    <ligand>
        <name>Mg(2+)</name>
        <dbReference type="ChEBI" id="CHEBI:18420"/>
        <label>2</label>
    </ligand>
</feature>
<dbReference type="EC" id="3.1.26.8" evidence="1"/>
<dbReference type="EMBL" id="AL591973">
    <property type="protein sequence ID" value="CAC98402.1"/>
    <property type="molecule type" value="Genomic_DNA"/>
</dbReference>
<dbReference type="PIR" id="AD1098">
    <property type="entry name" value="AD1098"/>
</dbReference>
<dbReference type="RefSeq" id="NP_463718.1">
    <property type="nucleotide sequence ID" value="NC_003210.1"/>
</dbReference>
<dbReference type="RefSeq" id="WP_010989372.1">
    <property type="nucleotide sequence ID" value="NC_003210.1"/>
</dbReference>
<dbReference type="SMR" id="Q8YAE3"/>
<dbReference type="STRING" id="169963.gene:17592823"/>
<dbReference type="PaxDb" id="169963-lmo0187"/>
<dbReference type="EnsemblBacteria" id="CAC98402">
    <property type="protein sequence ID" value="CAC98402"/>
    <property type="gene ID" value="CAC98402"/>
</dbReference>
<dbReference type="GeneID" id="987012"/>
<dbReference type="KEGG" id="lmo:lmo0187"/>
<dbReference type="PATRIC" id="fig|169963.11.peg.192"/>
<dbReference type="eggNOG" id="COG1658">
    <property type="taxonomic scope" value="Bacteria"/>
</dbReference>
<dbReference type="HOGENOM" id="CLU_109405_0_0_9"/>
<dbReference type="OrthoDB" id="9791329at2"/>
<dbReference type="PhylomeDB" id="Q8YAE3"/>
<dbReference type="BioCyc" id="LMON169963:LMO0187-MONOMER"/>
<dbReference type="Proteomes" id="UP000000817">
    <property type="component" value="Chromosome"/>
</dbReference>
<dbReference type="GO" id="GO:0005737">
    <property type="term" value="C:cytoplasm"/>
    <property type="evidence" value="ECO:0007669"/>
    <property type="project" value="UniProtKB-SubCell"/>
</dbReference>
<dbReference type="GO" id="GO:0046872">
    <property type="term" value="F:metal ion binding"/>
    <property type="evidence" value="ECO:0007669"/>
    <property type="project" value="UniProtKB-KW"/>
</dbReference>
<dbReference type="GO" id="GO:0043822">
    <property type="term" value="F:ribonuclease M5 activity"/>
    <property type="evidence" value="ECO:0000318"/>
    <property type="project" value="GO_Central"/>
</dbReference>
<dbReference type="GO" id="GO:0019843">
    <property type="term" value="F:rRNA binding"/>
    <property type="evidence" value="ECO:0007669"/>
    <property type="project" value="UniProtKB-KW"/>
</dbReference>
<dbReference type="GO" id="GO:0006364">
    <property type="term" value="P:rRNA processing"/>
    <property type="evidence" value="ECO:0000318"/>
    <property type="project" value="GO_Central"/>
</dbReference>
<dbReference type="CDD" id="cd01027">
    <property type="entry name" value="TOPRIM_RNase_M5_like"/>
    <property type="match status" value="1"/>
</dbReference>
<dbReference type="FunFam" id="3.40.1360.10:FF:000006">
    <property type="entry name" value="Ribonuclease M5"/>
    <property type="match status" value="1"/>
</dbReference>
<dbReference type="Gene3D" id="3.40.1360.10">
    <property type="match status" value="1"/>
</dbReference>
<dbReference type="HAMAP" id="MF_01469">
    <property type="entry name" value="RNase_M5"/>
    <property type="match status" value="1"/>
</dbReference>
<dbReference type="InterPro" id="IPR004466">
    <property type="entry name" value="RNase_M5"/>
</dbReference>
<dbReference type="InterPro" id="IPR025156">
    <property type="entry name" value="RNase_M5_C"/>
</dbReference>
<dbReference type="InterPro" id="IPR006171">
    <property type="entry name" value="TOPRIM_dom"/>
</dbReference>
<dbReference type="InterPro" id="IPR034141">
    <property type="entry name" value="TOPRIM_RNase_M5-like"/>
</dbReference>
<dbReference type="NCBIfam" id="TIGR00334">
    <property type="entry name" value="5S_RNA_mat_M5"/>
    <property type="match status" value="1"/>
</dbReference>
<dbReference type="PANTHER" id="PTHR39156">
    <property type="entry name" value="RIBONUCLEASE M5"/>
    <property type="match status" value="1"/>
</dbReference>
<dbReference type="PANTHER" id="PTHR39156:SF1">
    <property type="entry name" value="RIBONUCLEASE M5"/>
    <property type="match status" value="1"/>
</dbReference>
<dbReference type="Pfam" id="PF13331">
    <property type="entry name" value="DUF4093"/>
    <property type="match status" value="1"/>
</dbReference>
<dbReference type="Pfam" id="PF01751">
    <property type="entry name" value="Toprim"/>
    <property type="match status" value="1"/>
</dbReference>
<dbReference type="SMART" id="SM00493">
    <property type="entry name" value="TOPRIM"/>
    <property type="match status" value="1"/>
</dbReference>
<dbReference type="SUPFAM" id="SSF110455">
    <property type="entry name" value="Toprim domain"/>
    <property type="match status" value="1"/>
</dbReference>
<dbReference type="PROSITE" id="PS50880">
    <property type="entry name" value="TOPRIM"/>
    <property type="match status" value="1"/>
</dbReference>
<evidence type="ECO:0000255" key="1">
    <source>
        <dbReference type="HAMAP-Rule" id="MF_01469"/>
    </source>
</evidence>